<feature type="chain" id="PRO_0000441965" description="Hydroxymethylglutaryl-CoA synthase">
    <location>
        <begin position="1"/>
        <end position="462"/>
    </location>
</feature>
<feature type="active site" description="Proton donor/acceptor" evidence="2">
    <location>
        <position position="86"/>
    </location>
</feature>
<feature type="active site" description="Acyl-thioester intermediate" evidence="2">
    <location>
        <position position="120"/>
    </location>
</feature>
<feature type="active site" description="Proton donor/acceptor" evidence="2">
    <location>
        <position position="261"/>
    </location>
</feature>
<feature type="binding site" evidence="1">
    <location>
        <position position="120"/>
    </location>
    <ligand>
        <name>(3S)-3-hydroxy-3-methylglutaryl-CoA</name>
        <dbReference type="ChEBI" id="CHEBI:43074"/>
    </ligand>
</feature>
<feature type="binding site" evidence="1">
    <location>
        <position position="211"/>
    </location>
    <ligand>
        <name>(3S)-3-hydroxy-3-methylglutaryl-CoA</name>
        <dbReference type="ChEBI" id="CHEBI:43074"/>
    </ligand>
</feature>
<feature type="binding site" evidence="1">
    <location>
        <position position="261"/>
    </location>
    <ligand>
        <name>(3S)-3-hydroxy-3-methylglutaryl-CoA</name>
        <dbReference type="ChEBI" id="CHEBI:43074"/>
    </ligand>
</feature>
<feature type="binding site" evidence="1">
    <location>
        <position position="270"/>
    </location>
    <ligand>
        <name>(3S)-3-hydroxy-3-methylglutaryl-CoA</name>
        <dbReference type="ChEBI" id="CHEBI:43074"/>
    </ligand>
</feature>
<feature type="binding site" evidence="1">
    <location>
        <position position="338"/>
    </location>
    <ligand>
        <name>(3S)-3-hydroxy-3-methylglutaryl-CoA</name>
        <dbReference type="ChEBI" id="CHEBI:43074"/>
    </ligand>
</feature>
<feature type="binding site" evidence="1">
    <location>
        <position position="372"/>
    </location>
    <ligand>
        <name>(3S)-3-hydroxy-3-methylglutaryl-CoA</name>
        <dbReference type="ChEBI" id="CHEBI:43074"/>
    </ligand>
</feature>
<evidence type="ECO:0000250" key="1">
    <source>
        <dbReference type="UniProtKB" id="P54868"/>
    </source>
</evidence>
<evidence type="ECO:0000255" key="2">
    <source>
        <dbReference type="PROSITE-ProRule" id="PRU10116"/>
    </source>
</evidence>
<evidence type="ECO:0000255" key="3">
    <source>
        <dbReference type="RuleBase" id="RU364071"/>
    </source>
</evidence>
<evidence type="ECO:0000269" key="4">
    <source>
    </source>
</evidence>
<evidence type="ECO:0000303" key="5">
    <source>
    </source>
</evidence>
<evidence type="ECO:0000305" key="6"/>
<sequence>MSARPQNVGIKAIEIYFPRRCISEDELEDFDGVAKGKYTIGFGQKYMACTDDREDINSFALSVVSGLLEKNNIDPRSIGRLDVGTETIIDKSKSVKTVLMDLFAPSGNMNIEGIDSKNACYGGTAALFNAINWVESSSWDGRDAIVVAGDIAIYAEGSARPVGGAGSVAMLIGPDAPLVFEPAHGTHMSNYWDFYKPNLSSEYPEVDGPETIQTYLGCLDKAYDAYRLRAAKLKSGAANGHSDASSLASIKVDDFDYTLFHSPYSKLVQKGFGRLLYNDFFSDPKNEKYASIPANFAELDRKSTITNKDVEKAFAAFGKEAQQTKLEPGMNTVRRCGNMYTASLYGGLVSLLSNIPSQEIQGKRILLYSFGSGAAASMFAIRINGSTEQIVKAVDLKNRLDSMKVVPCQTYVEALKTREATHNAVNHKPVGQLENLWPGAYYLENVDHMYRRTYGRIPTNAN</sequence>
<keyword id="KW-1185">Reference proteome</keyword>
<keyword id="KW-0808">Transferase</keyword>
<keyword id="KW-0843">Virulence</keyword>
<accession>Q4P3F1</accession>
<accession>D4G7A2</accession>
<name>HCS1_MYCMD</name>
<organism>
    <name type="scientific">Mycosarcoma maydis</name>
    <name type="common">Corn smut fungus</name>
    <name type="synonym">Ustilago maydis</name>
    <dbReference type="NCBI Taxonomy" id="5270"/>
    <lineage>
        <taxon>Eukaryota</taxon>
        <taxon>Fungi</taxon>
        <taxon>Dikarya</taxon>
        <taxon>Basidiomycota</taxon>
        <taxon>Ustilaginomycotina</taxon>
        <taxon>Ustilaginomycetes</taxon>
        <taxon>Ustilaginales</taxon>
        <taxon>Ustilaginaceae</taxon>
        <taxon>Mycosarcoma</taxon>
    </lineage>
</organism>
<reference key="1">
    <citation type="journal article" date="2006" name="Nature">
        <title>Insights from the genome of the biotrophic fungal plant pathogen Ustilago maydis.</title>
        <authorList>
            <person name="Kaemper J."/>
            <person name="Kahmann R."/>
            <person name="Boelker M."/>
            <person name="Ma L.-J."/>
            <person name="Brefort T."/>
            <person name="Saville B.J."/>
            <person name="Banuett F."/>
            <person name="Kronstad J.W."/>
            <person name="Gold S.E."/>
            <person name="Mueller O."/>
            <person name="Perlin M.H."/>
            <person name="Woesten H.A.B."/>
            <person name="de Vries R."/>
            <person name="Ruiz-Herrera J."/>
            <person name="Reynaga-Pena C.G."/>
            <person name="Snetselaar K."/>
            <person name="McCann M."/>
            <person name="Perez-Martin J."/>
            <person name="Feldbruegge M."/>
            <person name="Basse C.W."/>
            <person name="Steinberg G."/>
            <person name="Ibeas J.I."/>
            <person name="Holloman W."/>
            <person name="Guzman P."/>
            <person name="Farman M.L."/>
            <person name="Stajich J.E."/>
            <person name="Sentandreu R."/>
            <person name="Gonzalez-Prieto J.M."/>
            <person name="Kennell J.C."/>
            <person name="Molina L."/>
            <person name="Schirawski J."/>
            <person name="Mendoza-Mendoza A."/>
            <person name="Greilinger D."/>
            <person name="Muench K."/>
            <person name="Roessel N."/>
            <person name="Scherer M."/>
            <person name="Vranes M."/>
            <person name="Ladendorf O."/>
            <person name="Vincon V."/>
            <person name="Fuchs U."/>
            <person name="Sandrock B."/>
            <person name="Meng S."/>
            <person name="Ho E.C.H."/>
            <person name="Cahill M.J."/>
            <person name="Boyce K.J."/>
            <person name="Klose J."/>
            <person name="Klosterman S.J."/>
            <person name="Deelstra H.J."/>
            <person name="Ortiz-Castellanos L."/>
            <person name="Li W."/>
            <person name="Sanchez-Alonso P."/>
            <person name="Schreier P.H."/>
            <person name="Haeuser-Hahn I."/>
            <person name="Vaupel M."/>
            <person name="Koopmann E."/>
            <person name="Friedrich G."/>
            <person name="Voss H."/>
            <person name="Schlueter T."/>
            <person name="Margolis J."/>
            <person name="Platt D."/>
            <person name="Swimmer C."/>
            <person name="Gnirke A."/>
            <person name="Chen F."/>
            <person name="Vysotskaia V."/>
            <person name="Mannhaupt G."/>
            <person name="Gueldener U."/>
            <person name="Muensterkoetter M."/>
            <person name="Haase D."/>
            <person name="Oesterheld M."/>
            <person name="Mewes H.-W."/>
            <person name="Mauceli E.W."/>
            <person name="DeCaprio D."/>
            <person name="Wade C.M."/>
            <person name="Butler J."/>
            <person name="Young S.K."/>
            <person name="Jaffe D.B."/>
            <person name="Calvo S.E."/>
            <person name="Nusbaum C."/>
            <person name="Galagan J.E."/>
            <person name="Birren B.W."/>
        </authorList>
    </citation>
    <scope>NUCLEOTIDE SEQUENCE [LARGE SCALE GENOMIC DNA]</scope>
    <source>
        <strain>DSM 14603 / FGSC 9021 / UM521</strain>
    </source>
</reference>
<reference key="2">
    <citation type="submission" date="2014-09" db="EMBL/GenBank/DDBJ databases">
        <authorList>
            <person name="Gueldener U."/>
            <person name="Muensterkoetter M."/>
            <person name="Walter M.C."/>
            <person name="Mannhaupt G."/>
            <person name="Kahmann R."/>
        </authorList>
    </citation>
    <scope>GENOME REANNOTATION</scope>
    <source>
        <strain>DSM 14603 / FGSC 9021 / UM521</strain>
    </source>
</reference>
<reference key="3">
    <citation type="journal article" date="2010" name="Mol. Microbiol.">
        <title>Elucidation of the complete ferrichrome A biosynthetic pathway in Ustilago maydis.</title>
        <authorList>
            <person name="Winterberg B."/>
            <person name="Uhlmann S."/>
            <person name="Linne U."/>
            <person name="Lessing F."/>
            <person name="Marahiel M.A."/>
            <person name="Eichhorn H."/>
            <person name="Kahmann R."/>
            <person name="Schirawski J."/>
        </authorList>
    </citation>
    <scope>FUNCTION</scope>
    <scope>DISRUPTION PHENOTYPE</scope>
    <scope>CATALYTIC ACTIVITY</scope>
    <source>
        <strain>DSM 14603 / FGSC 9021 / UM521</strain>
    </source>
</reference>
<comment type="function">
    <text evidence="4">Hydroxymethylglutaryl-CoA synthase involved in the biosynthesis of siderophore ferrichrome A which is contributing to organismal virulence (PubMed:20070524). The first step of ferrichrome A biosynthesis is performed by the HMG-CoA synthase hcs1 which catalyzes the generation of HMG-CoA and CoA using acetoacetyl-CoA and acetyl-CoA as substrates (PubMed:20070524). The enoyl-CoA isomerase/hydratase fer4 then catalyzes the conversion of hcs1-produced HMG-CoA to methylglutaconyl-CoA (PubMed:20070524). The acyltransferase fer5 then fuses the fer4-generated methylglutaconyl-CoA with sid1-generated hydroxyornithine to yield methylglutaconyl hydroxyornithine (PubMed:20070524). Methylglutaconyl hydroxyornithine is then available for use by the NRPS fer3 to generate ferrichrome A (PubMed:20070524).</text>
</comment>
<comment type="catalytic activity">
    <reaction evidence="4">
        <text>acetoacetyl-CoA + acetyl-CoA + H2O = (3S)-3-hydroxy-3-methylglutaryl-CoA + CoA + H(+)</text>
        <dbReference type="Rhea" id="RHEA:10188"/>
        <dbReference type="ChEBI" id="CHEBI:15377"/>
        <dbReference type="ChEBI" id="CHEBI:15378"/>
        <dbReference type="ChEBI" id="CHEBI:43074"/>
        <dbReference type="ChEBI" id="CHEBI:57286"/>
        <dbReference type="ChEBI" id="CHEBI:57287"/>
        <dbReference type="ChEBI" id="CHEBI:57288"/>
        <dbReference type="EC" id="2.3.3.10"/>
    </reaction>
</comment>
<comment type="pathway">
    <text evidence="4">Siderophore biosynthesis.</text>
</comment>
<comment type="disruption phenotype">
    <text evidence="4">Leads to a swollen morphology and a cytokinesis defect preceding lysis of cells (PubMed:20070524).</text>
</comment>
<comment type="similarity">
    <text evidence="6">Belongs to the thiolase-like superfamily. HMG-CoA synthase family.</text>
</comment>
<protein>
    <recommendedName>
        <fullName evidence="5">Hydroxymethylglutaryl-CoA synthase</fullName>
        <shortName evidence="5">HMG-CoA synthase</shortName>
        <ecNumber evidence="4">2.3.3.10</ecNumber>
    </recommendedName>
    <alternativeName>
        <fullName evidence="3">3-hydroxy-3-methylglutaryl coenzyme A synthase</fullName>
    </alternativeName>
</protein>
<dbReference type="EC" id="2.3.3.10" evidence="4"/>
<dbReference type="EMBL" id="CM003158">
    <property type="protein sequence ID" value="KIS66367.1"/>
    <property type="molecule type" value="Genomic_DNA"/>
</dbReference>
<dbReference type="EMBL" id="BN001277">
    <property type="protein sequence ID" value="CAR97787.1"/>
    <property type="molecule type" value="Genomic_DNA"/>
</dbReference>
<dbReference type="RefSeq" id="XP_011392062.1">
    <property type="nucleotide sequence ID" value="XM_011393760.1"/>
</dbReference>
<dbReference type="SMR" id="Q4P3F1"/>
<dbReference type="FunCoup" id="Q4P3F1">
    <property type="interactions" value="211"/>
</dbReference>
<dbReference type="STRING" id="237631.Q4P3F1"/>
<dbReference type="EnsemblFungi" id="KIS66367">
    <property type="protein sequence ID" value="KIS66367"/>
    <property type="gene ID" value="UMAG_05362"/>
</dbReference>
<dbReference type="GeneID" id="23565277"/>
<dbReference type="KEGG" id="uma:UMAG_05362"/>
<dbReference type="VEuPathDB" id="FungiDB:UMAG_05362"/>
<dbReference type="eggNOG" id="KOG1393">
    <property type="taxonomic scope" value="Eukaryota"/>
</dbReference>
<dbReference type="HOGENOM" id="CLU_008065_0_1_1"/>
<dbReference type="InParanoid" id="Q4P3F1"/>
<dbReference type="OMA" id="DDAYNWI"/>
<dbReference type="OrthoDB" id="1269963at2759"/>
<dbReference type="BioCyc" id="MetaCyc:MONOMER-18963"/>
<dbReference type="Proteomes" id="UP000000561">
    <property type="component" value="Chromosome 19"/>
</dbReference>
<dbReference type="GO" id="GO:0004421">
    <property type="term" value="F:hydroxymethylglutaryl-CoA synthase activity"/>
    <property type="evidence" value="ECO:0000318"/>
    <property type="project" value="GO_Central"/>
</dbReference>
<dbReference type="GO" id="GO:0006084">
    <property type="term" value="P:acetyl-CoA metabolic process"/>
    <property type="evidence" value="ECO:0000318"/>
    <property type="project" value="GO_Central"/>
</dbReference>
<dbReference type="GO" id="GO:0006696">
    <property type="term" value="P:ergosterol biosynthetic process"/>
    <property type="evidence" value="ECO:0000318"/>
    <property type="project" value="GO_Central"/>
</dbReference>
<dbReference type="GO" id="GO:0010142">
    <property type="term" value="P:farnesyl diphosphate biosynthetic process, mevalonate pathway"/>
    <property type="evidence" value="ECO:0000318"/>
    <property type="project" value="GO_Central"/>
</dbReference>
<dbReference type="CDD" id="cd00827">
    <property type="entry name" value="init_cond_enzymes"/>
    <property type="match status" value="1"/>
</dbReference>
<dbReference type="FunFam" id="3.40.47.10:FF:000008">
    <property type="entry name" value="3-hydroxy-3-methylglutaryl coenzyme A synthase"/>
    <property type="match status" value="1"/>
</dbReference>
<dbReference type="Gene3D" id="3.40.47.10">
    <property type="match status" value="1"/>
</dbReference>
<dbReference type="InterPro" id="IPR000590">
    <property type="entry name" value="HMG_CoA_synt_AS"/>
</dbReference>
<dbReference type="InterPro" id="IPR013746">
    <property type="entry name" value="HMG_CoA_synt_C_dom"/>
</dbReference>
<dbReference type="InterPro" id="IPR013528">
    <property type="entry name" value="HMG_CoA_synth_N"/>
</dbReference>
<dbReference type="InterPro" id="IPR010122">
    <property type="entry name" value="HMG_CoA_synthase_euk"/>
</dbReference>
<dbReference type="InterPro" id="IPR016039">
    <property type="entry name" value="Thiolase-like"/>
</dbReference>
<dbReference type="NCBIfam" id="TIGR01833">
    <property type="entry name" value="HMG-CoA-S_euk"/>
    <property type="match status" value="1"/>
</dbReference>
<dbReference type="PANTHER" id="PTHR43323">
    <property type="entry name" value="3-HYDROXY-3-METHYLGLUTARYL COENZYME A SYNTHASE"/>
    <property type="match status" value="1"/>
</dbReference>
<dbReference type="PANTHER" id="PTHR43323:SF2">
    <property type="entry name" value="HYDROXYMETHYLGLUTARYL-COA SYNTHASE"/>
    <property type="match status" value="1"/>
</dbReference>
<dbReference type="Pfam" id="PF08540">
    <property type="entry name" value="HMG_CoA_synt_C"/>
    <property type="match status" value="1"/>
</dbReference>
<dbReference type="Pfam" id="PF01154">
    <property type="entry name" value="HMG_CoA_synt_N"/>
    <property type="match status" value="1"/>
</dbReference>
<dbReference type="SUPFAM" id="SSF53901">
    <property type="entry name" value="Thiolase-like"/>
    <property type="match status" value="2"/>
</dbReference>
<dbReference type="PROSITE" id="PS01226">
    <property type="entry name" value="HMG_COA_SYNTHASE"/>
    <property type="match status" value="1"/>
</dbReference>
<proteinExistence type="evidence at protein level"/>
<gene>
    <name evidence="5" type="primary">hcs1</name>
    <name type="ORF">UMAG_05362</name>
</gene>